<keyword id="KW-0002">3D-structure</keyword>
<keyword id="KW-0175">Coiled coil</keyword>
<keyword id="KW-0472">Membrane</keyword>
<keyword id="KW-0479">Metal-binding</keyword>
<keyword id="KW-0509">mRNA transport</keyword>
<keyword id="KW-0906">Nuclear pore complex</keyword>
<keyword id="KW-0539">Nucleus</keyword>
<keyword id="KW-0653">Protein transport</keyword>
<keyword id="KW-1185">Reference proteome</keyword>
<keyword id="KW-0677">Repeat</keyword>
<keyword id="KW-0811">Translocation</keyword>
<keyword id="KW-0813">Transport</keyword>
<keyword id="KW-0862">Zinc</keyword>
<keyword id="KW-0863">Zinc-finger</keyword>
<feature type="chain" id="PRO_0000433186" description="Nucleoporin AMO1">
    <location>
        <begin position="1"/>
        <end position="557"/>
    </location>
</feature>
<feature type="repeat" description="SXFG 1">
    <location>
        <begin position="171"/>
        <end position="174"/>
    </location>
</feature>
<feature type="repeat" description="SXFG 2">
    <location>
        <begin position="200"/>
        <end position="203"/>
    </location>
</feature>
<feature type="repeat" description="SXFG 3">
    <location>
        <begin position="213"/>
        <end position="216"/>
    </location>
</feature>
<feature type="repeat" description="SXFG 4">
    <location>
        <begin position="228"/>
        <end position="231"/>
    </location>
</feature>
<feature type="repeat" description="SXFG 5">
    <location>
        <begin position="240"/>
        <end position="243"/>
    </location>
</feature>
<feature type="repeat" description="SXFG 6">
    <location>
        <begin position="249"/>
        <end position="252"/>
    </location>
</feature>
<feature type="repeat" description="SXFG 7">
    <location>
        <begin position="262"/>
        <end position="265"/>
    </location>
</feature>
<feature type="repeat" description="SXFG 8">
    <location>
        <begin position="282"/>
        <end position="285"/>
    </location>
</feature>
<feature type="repeat" description="SXFG 9">
    <location>
        <begin position="303"/>
        <end position="306"/>
    </location>
</feature>
<feature type="repeat" description="SXFG 10">
    <location>
        <begin position="314"/>
        <end position="317"/>
    </location>
</feature>
<feature type="repeat" description="SXFG 11">
    <location>
        <begin position="348"/>
        <end position="351"/>
    </location>
</feature>
<feature type="repeat" description="SXFG 12">
    <location>
        <begin position="370"/>
        <end position="373"/>
    </location>
</feature>
<feature type="repeat" description="SXFG 13">
    <location>
        <begin position="387"/>
        <end position="390"/>
    </location>
</feature>
<feature type="repeat" description="SXFG 14">
    <location>
        <begin position="407"/>
        <end position="410"/>
    </location>
</feature>
<feature type="zinc finger region" description="C3H1-type" evidence="3">
    <location>
        <begin position="1"/>
        <end position="25"/>
    </location>
</feature>
<feature type="region of interest" description="Disordered" evidence="4">
    <location>
        <begin position="161"/>
        <end position="297"/>
    </location>
</feature>
<feature type="region of interest" description="Disordered" evidence="4">
    <location>
        <begin position="315"/>
        <end position="463"/>
    </location>
</feature>
<feature type="coiled-coil region" evidence="2">
    <location>
        <begin position="114"/>
        <end position="141"/>
    </location>
</feature>
<feature type="compositionally biased region" description="Polar residues" evidence="4">
    <location>
        <begin position="195"/>
        <end position="215"/>
    </location>
</feature>
<feature type="compositionally biased region" description="Polar residues" evidence="4">
    <location>
        <begin position="243"/>
        <end position="253"/>
    </location>
</feature>
<feature type="compositionally biased region" description="Polar residues" evidence="4">
    <location>
        <begin position="321"/>
        <end position="338"/>
    </location>
</feature>
<feature type="compositionally biased region" description="Polar residues" evidence="4">
    <location>
        <begin position="351"/>
        <end position="366"/>
    </location>
</feature>
<feature type="compositionally biased region" description="Low complexity" evidence="4">
    <location>
        <begin position="367"/>
        <end position="385"/>
    </location>
</feature>
<feature type="compositionally biased region" description="Polar residues" evidence="4">
    <location>
        <begin position="388"/>
        <end position="429"/>
    </location>
</feature>
<feature type="compositionally biased region" description="Low complexity" evidence="4">
    <location>
        <begin position="430"/>
        <end position="443"/>
    </location>
</feature>
<feature type="sequence conflict" description="In Ref. 1; AEL00678." evidence="6" ref="1">
    <original>S</original>
    <variation>SAP</variation>
    <location>
        <position position="48"/>
    </location>
</feature>
<feature type="strand" evidence="8">
    <location>
        <begin position="503"/>
        <end position="506"/>
    </location>
</feature>
<feature type="helix" evidence="8">
    <location>
        <begin position="511"/>
        <end position="513"/>
    </location>
</feature>
<feature type="helix" evidence="8">
    <location>
        <begin position="518"/>
        <end position="522"/>
    </location>
</feature>
<feature type="helix" evidence="8">
    <location>
        <begin position="524"/>
        <end position="536"/>
    </location>
</feature>
<feature type="helix" evidence="8">
    <location>
        <begin position="550"/>
        <end position="552"/>
    </location>
</feature>
<name>AMO1_CHATD</name>
<sequence length="557" mass="57987">MTVCRFWQQGYCRNGNACKFEHPPKGGQNYNRFGALSGSGQGMGGRVSEPPHYPGLSEDAIQKDLTSELPTWILSCYGPGRDAPEQLFGGYPREQSFEEIRLHFYNGLMAGNPQGALNEIQAAYQAAQQQIQNTLQNIPAAVQFILDAANKHPNRIDICRESSKGSSTGGSVFGRNVNPFQQSSAAPLNPFGAPSTPSTSAFGQPSPLGQKSSAFGTPAFGQPSQPVSAFGKPSALGGGSAFGSPQTGSTFGQPSVLGAKPSAFGQPAFGQPAFGQPAFGQSAFGQPSALGPKPGAFGTSAGSAFGASTTTAPSPFGAAAQATQPANPFGQPSQQAANSFGKPAAPASAFGQPSTTTAQNPFGQPSTQSSAFGQQQPQQAGTFGSPSLFGQQQQQPSNVFGQPSTTSAFGSQAATSGFSQLGNATSTIGASPAGAQAPASKSPYHPGSTRQHPDLLSYATKNPAGGLDTFKGKPVVYETPKGAAKPVPHIRQFDGTLVRIWMPDGAPAYTADTEAEDPKVYEDEGVKRQWQSFLEKGRFEGGMPEVPPRREWCVWDF</sequence>
<proteinExistence type="evidence at protein level"/>
<reference key="1">
    <citation type="journal article" date="2011" name="Cell">
        <title>Insight into structure and assembly of the nuclear pore complex by utilizing the genome of a eukaryotic thermophile.</title>
        <authorList>
            <person name="Amlacher S."/>
            <person name="Sarges P."/>
            <person name="Flemming D."/>
            <person name="van Noort V."/>
            <person name="Kunze R."/>
            <person name="Devos D.P."/>
            <person name="Arumugam M."/>
            <person name="Bork P."/>
            <person name="Hurt E."/>
        </authorList>
    </citation>
    <scope>NUCLEOTIDE SEQUENCE [LARGE SCALE GENOMIC DNA]</scope>
    <source>
        <strain>DSM 1495 / CBS 144.50 / IMI 039719</strain>
    </source>
</reference>
<comment type="function">
    <text evidence="1">Functions as a component of the nuclear pore complex (NPC). NPC components, collectively referred to as nucleoporins (NUPs), can play the role of both NPC structural components and of docking or interaction partners for transiently associated nuclear transport factors. Active directional transport is assured by both, a Phe-Gly (FG) repeat affinity gradient for these transport factors across the NPC and a transport cofactor concentration gradient across the nuclear envelope (GSP1 and GSP2 GTPases associated predominantly with GTP in the nucleus, with GDP in the cytoplasm). AMO1 is specifically important for nuclear protein and mRNA export.</text>
</comment>
<comment type="subunit">
    <text evidence="1 7">The nuclear pore complex (NPC) constitutes the exclusive means of nucleocytoplasmic transport. NPCs allow the passive diffusion of ions and small molecules and the active, nuclear transport receptor-mediated bidirectional transport of macromolecules such as proteins, RNAs, ribonucleoparticles (RNPs), and ribosomal subunits across the nuclear envelope. The 55-60 MDa NPC is composed of at least 28 different subunits: AMO1, ELYS, GLE1, GLE2, MLP1, NDC1, NIC96, NSP1, NUP133, NUP145, NUP152, NUP159, NUP170, NUP188, NUP192, NUP37, NUP49, NUP53, NUP56, NUP57, NUP82, NUP84, NUP85, POM152, POM33, POM34, SEC13 and SEH1. Due to its 8-fold rotational symmetry, all subunits are present with 8 copies or multiples thereof.</text>
</comment>
<comment type="subcellular location">
    <subcellularLocation>
        <location evidence="1">Nucleus</location>
        <location evidence="1">Nuclear pore complex</location>
    </subcellularLocation>
    <subcellularLocation>
        <location evidence="1">Nucleus membrane</location>
        <topology evidence="1">Peripheral membrane protein</topology>
        <orientation evidence="1">Cytoplasmic side</orientation>
    </subcellularLocation>
</comment>
<comment type="domain">
    <text evidence="1">Contains FG repeats. FG repeats are interaction sites for karyopherins (importins, exportins) and form probably an affinity gradient, guiding the transport proteins unidirectionally with their cargo through the NPC. FG repeat regions are highly flexible and lack ordered secondary structure. The overall conservation of FG repeats regarding exact sequence, spacing, and repeat unit length is limited. FG repeat types and their physico-chemical environment change across the NPC from the nucleoplasmic to the cytoplasmic side: SXFG/PXFG repeats are especially abundant in NUPs on the cytoplasmic side.</text>
</comment>
<accession>G0S381</accession>
<accession>G0ZGU0</accession>
<protein>
    <recommendedName>
        <fullName evidence="5">Nucleoporin AMO1</fullName>
    </recommendedName>
    <alternativeName>
        <fullName>Nuclear pore protein AMO1</fullName>
    </alternativeName>
</protein>
<evidence type="ECO:0000250" key="1">
    <source>
        <dbReference type="UniProtKB" id="P49686"/>
    </source>
</evidence>
<evidence type="ECO:0000255" key="2"/>
<evidence type="ECO:0000255" key="3">
    <source>
        <dbReference type="PROSITE-ProRule" id="PRU00723"/>
    </source>
</evidence>
<evidence type="ECO:0000256" key="4">
    <source>
        <dbReference type="SAM" id="MobiDB-lite"/>
    </source>
</evidence>
<evidence type="ECO:0000303" key="5">
    <source>
    </source>
</evidence>
<evidence type="ECO:0000305" key="6"/>
<evidence type="ECO:0000305" key="7">
    <source>
    </source>
</evidence>
<evidence type="ECO:0007829" key="8">
    <source>
        <dbReference type="PDB" id="6B4H"/>
    </source>
</evidence>
<gene>
    <name type="primary">AMO1</name>
    <name type="ORF">CTHT_0020020</name>
</gene>
<dbReference type="EMBL" id="GL988040">
    <property type="protein sequence ID" value="EGS22464.1"/>
    <property type="molecule type" value="Genomic_DNA"/>
</dbReference>
<dbReference type="EMBL" id="JF276280">
    <property type="protein sequence ID" value="AEL00678.1"/>
    <property type="molecule type" value="Genomic_DNA"/>
</dbReference>
<dbReference type="RefSeq" id="XP_006692483.1">
    <property type="nucleotide sequence ID" value="XM_006692420.1"/>
</dbReference>
<dbReference type="PDB" id="6B4G">
    <property type="method" value="X-ray"/>
    <property type="resolution" value="2.65 A"/>
    <property type="chains" value="B/D/F/H=493-557"/>
</dbReference>
<dbReference type="PDB" id="6B4H">
    <property type="method" value="X-ray"/>
    <property type="resolution" value="2.17 A"/>
    <property type="chains" value="B/D=493-557"/>
</dbReference>
<dbReference type="PDBsum" id="6B4G"/>
<dbReference type="PDBsum" id="6B4H"/>
<dbReference type="SMR" id="G0S381"/>
<dbReference type="STRING" id="759272.G0S381"/>
<dbReference type="TCDB" id="1.I.1.1.2">
    <property type="family name" value="the nuclear pore complex (npc) family"/>
</dbReference>
<dbReference type="GeneID" id="18256040"/>
<dbReference type="KEGG" id="cthr:CTHT_0020020"/>
<dbReference type="eggNOG" id="ENOG502RVHV">
    <property type="taxonomic scope" value="Eukaryota"/>
</dbReference>
<dbReference type="HOGENOM" id="CLU_028685_1_0_1"/>
<dbReference type="OMA" id="PNRHDIC"/>
<dbReference type="OrthoDB" id="20729at2759"/>
<dbReference type="Proteomes" id="UP000008066">
    <property type="component" value="Unassembled WGS sequence"/>
</dbReference>
<dbReference type="GO" id="GO:0031965">
    <property type="term" value="C:nuclear membrane"/>
    <property type="evidence" value="ECO:0007669"/>
    <property type="project" value="UniProtKB-SubCell"/>
</dbReference>
<dbReference type="GO" id="GO:0005643">
    <property type="term" value="C:nuclear pore"/>
    <property type="evidence" value="ECO:0007669"/>
    <property type="project" value="UniProtKB-SubCell"/>
</dbReference>
<dbReference type="GO" id="GO:0008270">
    <property type="term" value="F:zinc ion binding"/>
    <property type="evidence" value="ECO:0007669"/>
    <property type="project" value="UniProtKB-KW"/>
</dbReference>
<dbReference type="GO" id="GO:0051028">
    <property type="term" value="P:mRNA transport"/>
    <property type="evidence" value="ECO:0007669"/>
    <property type="project" value="UniProtKB-KW"/>
</dbReference>
<dbReference type="GO" id="GO:0015031">
    <property type="term" value="P:protein transport"/>
    <property type="evidence" value="ECO:0007669"/>
    <property type="project" value="UniProtKB-KW"/>
</dbReference>
<dbReference type="CDD" id="cd23954">
    <property type="entry name" value="AMO1_CTD"/>
    <property type="match status" value="1"/>
</dbReference>
<dbReference type="Gene3D" id="4.10.1000.10">
    <property type="entry name" value="Zinc finger, CCCH-type"/>
    <property type="match status" value="1"/>
</dbReference>
<dbReference type="InterPro" id="IPR041367">
    <property type="entry name" value="Znf-CCCH_4"/>
</dbReference>
<dbReference type="InterPro" id="IPR000571">
    <property type="entry name" value="Znf_CCCH"/>
</dbReference>
<dbReference type="InterPro" id="IPR036855">
    <property type="entry name" value="Znf_CCCH_sf"/>
</dbReference>
<dbReference type="PANTHER" id="PTHR21099">
    <property type="entry name" value="RAD201"/>
    <property type="match status" value="1"/>
</dbReference>
<dbReference type="PANTHER" id="PTHR21099:SF2">
    <property type="entry name" value="SI:CH211-113E8.11"/>
    <property type="match status" value="1"/>
</dbReference>
<dbReference type="Pfam" id="PF18044">
    <property type="entry name" value="zf-CCCH_4"/>
    <property type="match status" value="1"/>
</dbReference>
<dbReference type="SMART" id="SM00356">
    <property type="entry name" value="ZnF_C3H1"/>
    <property type="match status" value="1"/>
</dbReference>
<dbReference type="SUPFAM" id="SSF90229">
    <property type="entry name" value="CCCH zinc finger"/>
    <property type="match status" value="1"/>
</dbReference>
<dbReference type="PROSITE" id="PS50103">
    <property type="entry name" value="ZF_C3H1"/>
    <property type="match status" value="1"/>
</dbReference>
<organism>
    <name type="scientific">Chaetomium thermophilum (strain DSM 1495 / CBS 144.50 / IMI 039719)</name>
    <name type="common">Thermochaetoides thermophila</name>
    <dbReference type="NCBI Taxonomy" id="759272"/>
    <lineage>
        <taxon>Eukaryota</taxon>
        <taxon>Fungi</taxon>
        <taxon>Dikarya</taxon>
        <taxon>Ascomycota</taxon>
        <taxon>Pezizomycotina</taxon>
        <taxon>Sordariomycetes</taxon>
        <taxon>Sordariomycetidae</taxon>
        <taxon>Sordariales</taxon>
        <taxon>Chaetomiaceae</taxon>
        <taxon>Thermochaetoides</taxon>
    </lineage>
</organism>